<proteinExistence type="inferred from homology"/>
<dbReference type="EMBL" id="CP000560">
    <property type="protein sequence ID" value="ABS74395.1"/>
    <property type="molecule type" value="Genomic_DNA"/>
</dbReference>
<dbReference type="RefSeq" id="WP_003153541.1">
    <property type="nucleotide sequence ID" value="NC_009725.2"/>
</dbReference>
<dbReference type="SMR" id="A7Z5W9"/>
<dbReference type="GeneID" id="93081167"/>
<dbReference type="KEGG" id="bay:RBAM_020330"/>
<dbReference type="HOGENOM" id="CLU_140309_1_0_9"/>
<dbReference type="Proteomes" id="UP000001120">
    <property type="component" value="Chromosome"/>
</dbReference>
<dbReference type="GO" id="GO:0005737">
    <property type="term" value="C:cytoplasm"/>
    <property type="evidence" value="ECO:0007669"/>
    <property type="project" value="UniProtKB-SubCell"/>
</dbReference>
<dbReference type="GO" id="GO:0051301">
    <property type="term" value="P:cell division"/>
    <property type="evidence" value="ECO:0007669"/>
    <property type="project" value="UniProtKB-UniRule"/>
</dbReference>
<dbReference type="GO" id="GO:0008360">
    <property type="term" value="P:regulation of cell shape"/>
    <property type="evidence" value="ECO:0007669"/>
    <property type="project" value="UniProtKB-UniRule"/>
</dbReference>
<dbReference type="Gene3D" id="6.10.250.660">
    <property type="match status" value="1"/>
</dbReference>
<dbReference type="HAMAP" id="MF_02011">
    <property type="entry name" value="GpsB"/>
    <property type="match status" value="1"/>
</dbReference>
<dbReference type="InterPro" id="IPR011229">
    <property type="entry name" value="Cell_cycle_GpsB"/>
</dbReference>
<dbReference type="InterPro" id="IPR019933">
    <property type="entry name" value="DivIVA_domain"/>
</dbReference>
<dbReference type="InterPro" id="IPR007793">
    <property type="entry name" value="DivIVA_fam"/>
</dbReference>
<dbReference type="NCBIfam" id="TIGR03544">
    <property type="entry name" value="DivI1A_domain"/>
    <property type="match status" value="1"/>
</dbReference>
<dbReference type="NCBIfam" id="NF010725">
    <property type="entry name" value="PRK14127.1"/>
    <property type="match status" value="1"/>
</dbReference>
<dbReference type="PANTHER" id="PTHR35794:SF1">
    <property type="entry name" value="CELL CYCLE PROTEIN GPSB"/>
    <property type="match status" value="1"/>
</dbReference>
<dbReference type="PANTHER" id="PTHR35794">
    <property type="entry name" value="CELL DIVISION PROTEIN DIVIVA"/>
    <property type="match status" value="1"/>
</dbReference>
<dbReference type="Pfam" id="PF05103">
    <property type="entry name" value="DivIVA"/>
    <property type="match status" value="1"/>
</dbReference>
<dbReference type="PIRSF" id="PIRSF029938">
    <property type="entry name" value="UCP029938"/>
    <property type="match status" value="1"/>
</dbReference>
<reference key="1">
    <citation type="journal article" date="2007" name="Nat. Biotechnol.">
        <title>Comparative analysis of the complete genome sequence of the plant growth-promoting bacterium Bacillus amyloliquefaciens FZB42.</title>
        <authorList>
            <person name="Chen X.H."/>
            <person name="Koumoutsi A."/>
            <person name="Scholz R."/>
            <person name="Eisenreich A."/>
            <person name="Schneider K."/>
            <person name="Heinemeyer I."/>
            <person name="Morgenstern B."/>
            <person name="Voss B."/>
            <person name="Hess W.R."/>
            <person name="Reva O."/>
            <person name="Junge H."/>
            <person name="Voigt B."/>
            <person name="Jungblut P.R."/>
            <person name="Vater J."/>
            <person name="Suessmuth R."/>
            <person name="Liesegang H."/>
            <person name="Strittmatter A."/>
            <person name="Gottschalk G."/>
            <person name="Borriss R."/>
        </authorList>
    </citation>
    <scope>NUCLEOTIDE SEQUENCE [LARGE SCALE GENOMIC DNA]</scope>
    <source>
        <strain>DSM 23117 / BGSC 10A6 / LMG 26770 / FZB42</strain>
    </source>
</reference>
<evidence type="ECO:0000255" key="1">
    <source>
        <dbReference type="HAMAP-Rule" id="MF_02011"/>
    </source>
</evidence>
<sequence>MLADKVKLSAKDILEKEFKTGVRGYRQEDVDKFLDMIIKDYETFHQEIEELQQENLQLKKQLEEASKKQPVQSNTTNFDILKRLSNLEKHVFGSKLYDE</sequence>
<protein>
    <recommendedName>
        <fullName evidence="1">Cell cycle protein GpsB</fullName>
    </recommendedName>
    <alternativeName>
        <fullName evidence="1">Guiding PBP1-shuttling protein</fullName>
    </alternativeName>
</protein>
<name>GPSB_BACVZ</name>
<keyword id="KW-0131">Cell cycle</keyword>
<keyword id="KW-0132">Cell division</keyword>
<keyword id="KW-0133">Cell shape</keyword>
<keyword id="KW-0175">Coiled coil</keyword>
<keyword id="KW-0963">Cytoplasm</keyword>
<feature type="chain" id="PRO_0000337905" description="Cell cycle protein GpsB">
    <location>
        <begin position="1"/>
        <end position="99"/>
    </location>
</feature>
<feature type="coiled-coil region" evidence="1">
    <location>
        <begin position="34"/>
        <end position="71"/>
    </location>
</feature>
<organism>
    <name type="scientific">Bacillus velezensis (strain DSM 23117 / BGSC 10A6 / LMG 26770 / FZB42)</name>
    <name type="common">Bacillus amyloliquefaciens subsp. plantarum</name>
    <dbReference type="NCBI Taxonomy" id="326423"/>
    <lineage>
        <taxon>Bacteria</taxon>
        <taxon>Bacillati</taxon>
        <taxon>Bacillota</taxon>
        <taxon>Bacilli</taxon>
        <taxon>Bacillales</taxon>
        <taxon>Bacillaceae</taxon>
        <taxon>Bacillus</taxon>
        <taxon>Bacillus amyloliquefaciens group</taxon>
    </lineage>
</organism>
<gene>
    <name evidence="1" type="primary">gpsB</name>
    <name type="ordered locus">RBAM_020330</name>
</gene>
<comment type="function">
    <text evidence="1">Divisome component that associates with the complex late in its assembly, after the Z-ring is formed, and is dependent on DivIC and PBP2B for its recruitment to the divisome. Together with EzrA, is a key component of the system that regulates PBP1 localization during cell cycle progression. Its main role could be the removal of PBP1 from the cell pole after pole maturation is completed. Also contributes to the recruitment of PBP1 to the division complex. Not essential for septum formation.</text>
</comment>
<comment type="subunit">
    <text evidence="1">Forms polymers through the coiled coil domains. Interacts with PBP1, MreC and EzrA.</text>
</comment>
<comment type="subcellular location">
    <subcellularLocation>
        <location evidence="1">Cytoplasm</location>
    </subcellularLocation>
    <text evidence="1">Shuttles between the lateral wall and the division site in a cell cycle-dependent manner.</text>
</comment>
<comment type="similarity">
    <text evidence="1">Belongs to the GpsB family.</text>
</comment>
<accession>A7Z5W9</accession>